<geneLocation type="chloroplast"/>
<evidence type="ECO:0000250" key="1">
    <source>
        <dbReference type="UniProtKB" id="P56785"/>
    </source>
</evidence>
<evidence type="ECO:0000255" key="2"/>
<evidence type="ECO:0000305" key="3"/>
<protein>
    <recommendedName>
        <fullName evidence="1">Protein TIC 214</fullName>
    </recommendedName>
    <alternativeName>
        <fullName evidence="1">Translocon at the inner envelope membrane of chloroplasts 214</fullName>
        <shortName evidence="1">AtTIC214</shortName>
    </alternativeName>
</protein>
<proteinExistence type="inferred from homology"/>
<accession>Q8M9T2</accession>
<feature type="chain" id="PRO_0000262603" description="Protein TIC 214">
    <location>
        <begin position="1"/>
        <end position="1450"/>
    </location>
</feature>
<feature type="transmembrane region" description="Helical" evidence="2">
    <location>
        <begin position="29"/>
        <end position="49"/>
    </location>
</feature>
<feature type="transmembrane region" description="Helical" evidence="2">
    <location>
        <begin position="61"/>
        <end position="81"/>
    </location>
</feature>
<feature type="transmembrane region" description="Helical" evidence="2">
    <location>
        <begin position="86"/>
        <end position="106"/>
    </location>
</feature>
<feature type="transmembrane region" description="Helical" evidence="2">
    <location>
        <begin position="132"/>
        <end position="152"/>
    </location>
</feature>
<feature type="transmembrane region" description="Helical" evidence="2">
    <location>
        <begin position="166"/>
        <end position="186"/>
    </location>
</feature>
<feature type="transmembrane region" description="Helical" evidence="2">
    <location>
        <begin position="213"/>
        <end position="233"/>
    </location>
</feature>
<dbReference type="EMBL" id="AF494278">
    <property type="protein sequence ID" value="AAM96581.1"/>
    <property type="molecule type" value="Genomic_DNA"/>
</dbReference>
<dbReference type="RefSeq" id="NP_683861.1">
    <property type="nucleotide sequence ID" value="NC_004115.1"/>
</dbReference>
<dbReference type="GeneID" id="860737"/>
<dbReference type="GO" id="GO:0009706">
    <property type="term" value="C:chloroplast inner membrane"/>
    <property type="evidence" value="ECO:0007669"/>
    <property type="project" value="UniProtKB-SubCell"/>
</dbReference>
<dbReference type="GO" id="GO:0015031">
    <property type="term" value="P:protein transport"/>
    <property type="evidence" value="ECO:0007669"/>
    <property type="project" value="UniProtKB-KW"/>
</dbReference>
<dbReference type="InterPro" id="IPR008896">
    <property type="entry name" value="TIC214"/>
</dbReference>
<dbReference type="Pfam" id="PF05758">
    <property type="entry name" value="Ycf1"/>
    <property type="match status" value="2"/>
</dbReference>
<gene>
    <name evidence="1" type="primary">TIC214</name>
    <name type="synonym">ycf1</name>
</gene>
<name>TI214_CHAGL</name>
<comment type="function">
    <text evidence="1">Involved in protein precursor import into chloroplasts. May be part of an intermediate translocation complex acting as a protein-conducting channel at the inner envelope.</text>
</comment>
<comment type="subunit">
    <text evidence="1">Part of the Tic complex.</text>
</comment>
<comment type="subcellular location">
    <subcellularLocation>
        <location evidence="1">Plastid</location>
        <location evidence="1">Chloroplast inner membrane</location>
        <topology evidence="2">Multi-pass membrane protein</topology>
    </subcellularLocation>
</comment>
<comment type="similarity">
    <text evidence="3">Belongs to the TIC214 family.</text>
</comment>
<sequence>MITTYSTFLFNFLSQFQYLVNIPEPLILFGLYYGFLTTLPISFSHIVVIRNRLIEGKTSSVMAFCGLITGQLCMIGTIYYTPLYKLFIKPHLILLLSIIYSFFYWQRLRNNQNYDDLREAQSLINVRNFFSFFDSFVFQILNPILLPTPIFFRLNNVFLFRYSNNLNFFLSFFIGSLIGNFLFFNALNWIRYRFEQDSNVIYPVLKLLINKSIIPIVFCICLIPIAKYSHIPFCTMKQKEGQSSYSFDKNWPNIIFDSNQPHRPIRIFSETKTDDNLNINDNLSKKQTSQFFFKECISDGNVRISYTYPSTLANFQTDLSSSFQDFSLSEQSFDNLYSNWKLEKLSRKDNLNNLLLTKIKLLNNKKEWFYKHFQNKFGTFIKDDNNYNKFVKKSNDVRLKQSSKIQIKKSKLLTSDIRDISTTQSGFYDLKKNKLKSFISQKFKMNSNNSTLPVWNHLNKQLLQNELKRIKKQLQDKTKNIKENDFNNLKLLKSNIETIDNTINDIHHNKIKQITSVDLIKIFATNNKTLLLETLAFNKKITQKDNFNFNKLFQHKNKKFTTNSGNENTYLNLNDIFKNIKRLPKWRTFSKHVVYDEVSDIRRRAIKSNSKLKIANKDSDIIIFEYKKSLNFRARLPKGSLRARRKNKFTWKLFHNNLNSPFFIRSKQLLNKTDIPFLKYNENYLNFFKNFISPDKNINYLNNDISEMRRQELLFKWDKTNVHILRSMVLVGQAFFRKYIKLPIFIFFKNLSRQLLYQPSEWTKDWSNWMNEWYIFCYYDGTELAKDQWPEMWLQRGIQIKLINPFYIKPWYIQKSFIKNKQNKKTRTSYLTVFGSQQELPFGKKIRMPSFWKPVRREVSKSIKLKLYFPFLTLQKNTIILFEKVFNKKRINEDNKTIEKSILNKKNEQLILKKDEVIPNNKSIAGKLSKLDFHNQNITKTSIKNATKQILIKNEYNSLLKENKNLFTKNKIVFLKIKNILNKLNLKLIKVKINFTYKIKTVLKIISRNLLKFYSIIQFQLENLGRNNSNDLSYKNQLSYQKDFPNFNNFCLNQANIIQNLCKNNILKHKKLNQNFQINSKNLNQTNIIDVNPENIKAQDFKNLLENIYTFTPTINLWDKLSTNNWKISVQNNWKQKSYNNYDLTKKALVSKNLNFISYFYQNNLINNLNKKIKHTKIFNLSKNYLSLNNLNQNQIKNFDFQNSLNNNITYKKNIKNFTIRQNVPSQLRRWDWKNNKIKKFVNRLLQKNTILLKEEVFNLIPFFDRFTIQNPMIRNWSHPISSILDDEIFTYELLDTFLQINKNIDFLHTKQIEDNLSSNSNQAIASLPLSSTTAENFLYYLTTVEDLISIEDKKELKILNSLNFNKSTPNYIKTNVVEKSLNENLSKNLQSILSKETLDSINNTQILKKFLWASYRCEDLACMNRFWFSTNNGSRFGTLRLRLYPNLKN</sequence>
<reference key="1">
    <citation type="journal article" date="2002" name="Proc. Natl. Acad. Sci. U.S.A.">
        <title>The chloroplast and mitochondrial genome sequences of the charophyte Chaetosphaeridium globosum: insights into the timing of the events that restructured organelle DNAs within the green algal lineage that led to land plants.</title>
        <authorList>
            <person name="Turmel M."/>
            <person name="Otis C."/>
            <person name="Lemieux C."/>
        </authorList>
    </citation>
    <scope>NUCLEOTIDE SEQUENCE [LARGE SCALE GENOMIC DNA]</scope>
    <source>
        <strain>M1311</strain>
    </source>
</reference>
<keyword id="KW-0150">Chloroplast</keyword>
<keyword id="KW-0472">Membrane</keyword>
<keyword id="KW-0934">Plastid</keyword>
<keyword id="KW-1001">Plastid inner membrane</keyword>
<keyword id="KW-0653">Protein transport</keyword>
<keyword id="KW-0812">Transmembrane</keyword>
<keyword id="KW-1133">Transmembrane helix</keyword>
<keyword id="KW-0813">Transport</keyword>
<organism>
    <name type="scientific">Chaetosphaeridium globosum</name>
    <name type="common">Charophycean green alga</name>
    <name type="synonym">Herposteiron globosum</name>
    <dbReference type="NCBI Taxonomy" id="96477"/>
    <lineage>
        <taxon>Eukaryota</taxon>
        <taxon>Viridiplantae</taxon>
        <taxon>Streptophyta</taxon>
        <taxon>Coleochaetophyceae</taxon>
        <taxon>Coleochaetales</taxon>
        <taxon>Chaetosphaeridiaceae</taxon>
        <taxon>Chaetosphaeridium</taxon>
    </lineage>
</organism>